<evidence type="ECO:0000256" key="1">
    <source>
        <dbReference type="SAM" id="MobiDB-lite"/>
    </source>
</evidence>
<evidence type="ECO:0000305" key="2"/>
<dbReference type="EMBL" id="D32216">
    <property type="protein sequence ID" value="BAA06958.1"/>
    <property type="molecule type" value="Genomic_DNA"/>
</dbReference>
<dbReference type="EMBL" id="D84432">
    <property type="protein sequence ID" value="BAA12422.1"/>
    <property type="molecule type" value="Genomic_DNA"/>
</dbReference>
<dbReference type="EMBL" id="AL009126">
    <property type="protein sequence ID" value="CAB14533.1"/>
    <property type="molecule type" value="Genomic_DNA"/>
</dbReference>
<dbReference type="EMBL" id="M59232">
    <property type="protein sequence ID" value="AAA62674.1"/>
    <property type="molecule type" value="Genomic_DNA"/>
</dbReference>
<dbReference type="PIR" id="A69968">
    <property type="entry name" value="A69968"/>
</dbReference>
<dbReference type="RefSeq" id="NP_390469.1">
    <property type="nucleotide sequence ID" value="NC_000964.3"/>
</dbReference>
<dbReference type="SMR" id="P24810"/>
<dbReference type="FunCoup" id="P24810">
    <property type="interactions" value="58"/>
</dbReference>
<dbReference type="STRING" id="224308.BSU25920"/>
<dbReference type="PaxDb" id="224308-BSU25920"/>
<dbReference type="EnsemblBacteria" id="CAB14533">
    <property type="protein sequence ID" value="CAB14533"/>
    <property type="gene ID" value="BSU_25920"/>
</dbReference>
<dbReference type="GeneID" id="937783"/>
<dbReference type="KEGG" id="bsu:BSU25920"/>
<dbReference type="PATRIC" id="fig|224308.179.peg.2817"/>
<dbReference type="eggNOG" id="ENOG5030EJ0">
    <property type="taxonomic scope" value="Bacteria"/>
</dbReference>
<dbReference type="InParanoid" id="P24810"/>
<dbReference type="OrthoDB" id="2896278at2"/>
<dbReference type="BioCyc" id="BSUB:BSU25920-MONOMER"/>
<dbReference type="Proteomes" id="UP000001570">
    <property type="component" value="Chromosome"/>
</dbReference>
<gene>
    <name type="primary">yqxG</name>
    <name type="synonym">yqdC</name>
    <name type="ordered locus">BSU25920</name>
</gene>
<reference key="1">
    <citation type="journal article" date="1995" name="Microbiology">
        <title>Complete nucleotide sequence of a skin element excised by DNA rearrangement during sporulation in Bacillus subtilis.</title>
        <authorList>
            <person name="Takemaru K."/>
            <person name="Mizuno M."/>
            <person name="Sato T."/>
            <person name="Takeuchi M."/>
            <person name="Kobayashi Y."/>
        </authorList>
    </citation>
    <scope>NUCLEOTIDE SEQUENCE [GENOMIC DNA]</scope>
    <source>
        <strain>168 / JH642</strain>
    </source>
</reference>
<reference key="2">
    <citation type="journal article" date="1996" name="Microbiology">
        <title>Systematic sequencing of the 283 kb 210 degrees-232 degrees region of the Bacillus subtilis genome containing the skin element and many sporulation genes.</title>
        <authorList>
            <person name="Mizuno M."/>
            <person name="Masuda S."/>
            <person name="Takemaru K."/>
            <person name="Hosono S."/>
            <person name="Sato T."/>
            <person name="Takeuchi M."/>
            <person name="Kobayashi Y."/>
        </authorList>
    </citation>
    <scope>NUCLEOTIDE SEQUENCE [GENOMIC DNA]</scope>
    <source>
        <strain>168 / JH642</strain>
    </source>
</reference>
<reference key="3">
    <citation type="journal article" date="1997" name="Nature">
        <title>The complete genome sequence of the Gram-positive bacterium Bacillus subtilis.</title>
        <authorList>
            <person name="Kunst F."/>
            <person name="Ogasawara N."/>
            <person name="Moszer I."/>
            <person name="Albertini A.M."/>
            <person name="Alloni G."/>
            <person name="Azevedo V."/>
            <person name="Bertero M.G."/>
            <person name="Bessieres P."/>
            <person name="Bolotin A."/>
            <person name="Borchert S."/>
            <person name="Borriss R."/>
            <person name="Boursier L."/>
            <person name="Brans A."/>
            <person name="Braun M."/>
            <person name="Brignell S.C."/>
            <person name="Bron S."/>
            <person name="Brouillet S."/>
            <person name="Bruschi C.V."/>
            <person name="Caldwell B."/>
            <person name="Capuano V."/>
            <person name="Carter N.M."/>
            <person name="Choi S.-K."/>
            <person name="Codani J.-J."/>
            <person name="Connerton I.F."/>
            <person name="Cummings N.J."/>
            <person name="Daniel R.A."/>
            <person name="Denizot F."/>
            <person name="Devine K.M."/>
            <person name="Duesterhoeft A."/>
            <person name="Ehrlich S.D."/>
            <person name="Emmerson P.T."/>
            <person name="Entian K.-D."/>
            <person name="Errington J."/>
            <person name="Fabret C."/>
            <person name="Ferrari E."/>
            <person name="Foulger D."/>
            <person name="Fritz C."/>
            <person name="Fujita M."/>
            <person name="Fujita Y."/>
            <person name="Fuma S."/>
            <person name="Galizzi A."/>
            <person name="Galleron N."/>
            <person name="Ghim S.-Y."/>
            <person name="Glaser P."/>
            <person name="Goffeau A."/>
            <person name="Golightly E.J."/>
            <person name="Grandi G."/>
            <person name="Guiseppi G."/>
            <person name="Guy B.J."/>
            <person name="Haga K."/>
            <person name="Haiech J."/>
            <person name="Harwood C.R."/>
            <person name="Henaut A."/>
            <person name="Hilbert H."/>
            <person name="Holsappel S."/>
            <person name="Hosono S."/>
            <person name="Hullo M.-F."/>
            <person name="Itaya M."/>
            <person name="Jones L.-M."/>
            <person name="Joris B."/>
            <person name="Karamata D."/>
            <person name="Kasahara Y."/>
            <person name="Klaerr-Blanchard M."/>
            <person name="Klein C."/>
            <person name="Kobayashi Y."/>
            <person name="Koetter P."/>
            <person name="Koningstein G."/>
            <person name="Krogh S."/>
            <person name="Kumano M."/>
            <person name="Kurita K."/>
            <person name="Lapidus A."/>
            <person name="Lardinois S."/>
            <person name="Lauber J."/>
            <person name="Lazarevic V."/>
            <person name="Lee S.-M."/>
            <person name="Levine A."/>
            <person name="Liu H."/>
            <person name="Masuda S."/>
            <person name="Mauel C."/>
            <person name="Medigue C."/>
            <person name="Medina N."/>
            <person name="Mellado R.P."/>
            <person name="Mizuno M."/>
            <person name="Moestl D."/>
            <person name="Nakai S."/>
            <person name="Noback M."/>
            <person name="Noone D."/>
            <person name="O'Reilly M."/>
            <person name="Ogawa K."/>
            <person name="Ogiwara A."/>
            <person name="Oudega B."/>
            <person name="Park S.-H."/>
            <person name="Parro V."/>
            <person name="Pohl T.M."/>
            <person name="Portetelle D."/>
            <person name="Porwollik S."/>
            <person name="Prescott A.M."/>
            <person name="Presecan E."/>
            <person name="Pujic P."/>
            <person name="Purnelle B."/>
            <person name="Rapoport G."/>
            <person name="Rey M."/>
            <person name="Reynolds S."/>
            <person name="Rieger M."/>
            <person name="Rivolta C."/>
            <person name="Rocha E."/>
            <person name="Roche B."/>
            <person name="Rose M."/>
            <person name="Sadaie Y."/>
            <person name="Sato T."/>
            <person name="Scanlan E."/>
            <person name="Schleich S."/>
            <person name="Schroeter R."/>
            <person name="Scoffone F."/>
            <person name="Sekiguchi J."/>
            <person name="Sekowska A."/>
            <person name="Seror S.J."/>
            <person name="Serror P."/>
            <person name="Shin B.-S."/>
            <person name="Soldo B."/>
            <person name="Sorokin A."/>
            <person name="Tacconi E."/>
            <person name="Takagi T."/>
            <person name="Takahashi H."/>
            <person name="Takemaru K."/>
            <person name="Takeuchi M."/>
            <person name="Tamakoshi A."/>
            <person name="Tanaka T."/>
            <person name="Terpstra P."/>
            <person name="Tognoni A."/>
            <person name="Tosato V."/>
            <person name="Uchiyama S."/>
            <person name="Vandenbol M."/>
            <person name="Vannier F."/>
            <person name="Vassarotti A."/>
            <person name="Viari A."/>
            <person name="Wambutt R."/>
            <person name="Wedler E."/>
            <person name="Wedler H."/>
            <person name="Weitzenegger T."/>
            <person name="Winters P."/>
            <person name="Wipat A."/>
            <person name="Yamamoto H."/>
            <person name="Yamane K."/>
            <person name="Yasumoto K."/>
            <person name="Yata K."/>
            <person name="Yoshida K."/>
            <person name="Yoshikawa H.-F."/>
            <person name="Zumstein E."/>
            <person name="Yoshikawa H."/>
            <person name="Danchin A."/>
        </authorList>
    </citation>
    <scope>NUCLEOTIDE SEQUENCE [LARGE SCALE GENOMIC DNA]</scope>
    <source>
        <strain>168</strain>
    </source>
</reference>
<reference key="4">
    <citation type="journal article" date="1991" name="J. Gen. Microbiol.">
        <title>Cloning, expression, sequence analysis and biochemical characterization of an autolytic amidase of Bacillus subtilis 168 trpC2.</title>
        <authorList>
            <person name="Foster S.J."/>
        </authorList>
    </citation>
    <scope>NUCLEOTIDE SEQUENCE [GENOMIC DNA] OF 132-297</scope>
    <source>
        <strain>168</strain>
    </source>
</reference>
<sequence length="297" mass="32541">MASYSFQFSTDATGKPGAAKPYREGNRDFVVPVASISGNSELLTNAVLKATEVYTQYGQDRLGQVLISKVKGHAYSDREGTLFIEESNDMNSWTTISSLVVKANTLGETEWIHLTKRYFRFRYANGNLQQSEFLLYQSLGAGEEDININHTVPITAVAPFSVQLDKSGLTNDGRLKVQTEGLNLSSLDTQSKTMDIVFHDKTETIGEGNPFTVGSFKTLLIEVYGTAETSELKFWGKSLSGTKRALRGQKVDDGTFATSTKGKSEAWSFSITGFKEIVMELTALTNGNFSVRGTAVS</sequence>
<organism>
    <name type="scientific">Bacillus subtilis (strain 168)</name>
    <dbReference type="NCBI Taxonomy" id="224308"/>
    <lineage>
        <taxon>Bacteria</taxon>
        <taxon>Bacillati</taxon>
        <taxon>Bacillota</taxon>
        <taxon>Bacilli</taxon>
        <taxon>Bacillales</taxon>
        <taxon>Bacillaceae</taxon>
        <taxon>Bacillus</taxon>
    </lineage>
</organism>
<keyword id="KW-1185">Reference proteome</keyword>
<proteinExistence type="predicted"/>
<protein>
    <recommendedName>
        <fullName>Uncharacterized protein YqxG</fullName>
    </recommendedName>
    <alternativeName>
        <fullName>ORF1</fullName>
    </alternativeName>
</protein>
<comment type="similarity">
    <text evidence="2">To B.subtilis XkdY/XepA.</text>
</comment>
<accession>P24810</accession>
<accession>P40741</accession>
<name>YQXG_BACSU</name>
<feature type="chain" id="PRO_0000049846" description="Uncharacterized protein YqxG">
    <location>
        <begin position="1"/>
        <end position="297"/>
    </location>
</feature>
<feature type="region of interest" description="Disordered" evidence="1">
    <location>
        <begin position="1"/>
        <end position="21"/>
    </location>
</feature>
<feature type="compositionally biased region" description="Polar residues" evidence="1">
    <location>
        <begin position="1"/>
        <end position="12"/>
    </location>
</feature>